<proteinExistence type="inferred from homology"/>
<organism>
    <name type="scientific">Aspergillus flavus (strain ATCC 200026 / FGSC A1120 / IAM 13836 / NRRL 3357 / JCM 12722 / SRRC 167)</name>
    <dbReference type="NCBI Taxonomy" id="332952"/>
    <lineage>
        <taxon>Eukaryota</taxon>
        <taxon>Fungi</taxon>
        <taxon>Dikarya</taxon>
        <taxon>Ascomycota</taxon>
        <taxon>Pezizomycotina</taxon>
        <taxon>Eurotiomycetes</taxon>
        <taxon>Eurotiomycetidae</taxon>
        <taxon>Eurotiales</taxon>
        <taxon>Aspergillaceae</taxon>
        <taxon>Aspergillus</taxon>
        <taxon>Aspergillus subgen. Circumdati</taxon>
    </lineage>
</organism>
<accession>B8MYV0</accession>
<name>XYND_ASPFN</name>
<feature type="signal peptide" evidence="2">
    <location>
        <begin position="1"/>
        <end position="20"/>
    </location>
</feature>
<feature type="chain" id="PRO_0000393287" description="Probable exo-1,4-beta-xylosidase xlnD">
    <location>
        <begin position="21"/>
        <end position="797"/>
    </location>
</feature>
<feature type="active site" evidence="1">
    <location>
        <position position="310"/>
    </location>
</feature>
<feature type="glycosylation site" description="N-linked (GlcNAc...) asparagine" evidence="2">
    <location>
        <position position="23"/>
    </location>
</feature>
<feature type="glycosylation site" description="N-linked (GlcNAc...) asparagine" evidence="2">
    <location>
        <position position="87"/>
    </location>
</feature>
<feature type="glycosylation site" description="N-linked (GlcNAc...) asparagine" evidence="2">
    <location>
        <position position="142"/>
    </location>
</feature>
<feature type="glycosylation site" description="N-linked (GlcNAc...) asparagine" evidence="2">
    <location>
        <position position="237"/>
    </location>
</feature>
<feature type="glycosylation site" description="N-linked (GlcNAc...) asparagine" evidence="2">
    <location>
        <position position="326"/>
    </location>
</feature>
<feature type="glycosylation site" description="N-linked (GlcNAc...) asparagine" evidence="2">
    <location>
        <position position="391"/>
    </location>
</feature>
<feature type="glycosylation site" description="N-linked (GlcNAc...) asparagine" evidence="2">
    <location>
        <position position="404"/>
    </location>
</feature>
<feature type="glycosylation site" description="N-linked (GlcNAc...) asparagine" evidence="2">
    <location>
        <position position="442"/>
    </location>
</feature>
<feature type="glycosylation site" description="N-linked (GlcNAc...) asparagine" evidence="2">
    <location>
        <position position="479"/>
    </location>
</feature>
<feature type="glycosylation site" description="N-linked (GlcNAc...) asparagine" evidence="2">
    <location>
        <position position="521"/>
    </location>
</feature>
<feature type="glycosylation site" description="N-linked (GlcNAc...) asparagine" evidence="2">
    <location>
        <position position="617"/>
    </location>
</feature>
<feature type="glycosylation site" description="N-linked (GlcNAc...) asparagine" evidence="2">
    <location>
        <position position="644"/>
    </location>
</feature>
<feature type="glycosylation site" description="N-linked (GlcNAc...) asparagine" evidence="2">
    <location>
        <position position="657"/>
    </location>
</feature>
<feature type="glycosylation site" description="N-linked (GlcNAc...) asparagine" evidence="2">
    <location>
        <position position="684"/>
    </location>
</feature>
<feature type="glycosylation site" description="N-linked (GlcNAc...) asparagine" evidence="2">
    <location>
        <position position="706"/>
    </location>
</feature>
<sequence>MPGAASIVAVLAALLPTALGQANQSYVDYNIEANPDLFSECLETGGTSFPDCESGPLSKTLVCDTSAKPHDRAAALVSLLTFEELVNNTANTGHGAPRIGLPAYQVWNEALHGVAHADFSDAGDFSWSTSFPQPISTMAALNRTLIHQIATIISTQGRAFMNAGRYGLDVYSPNINTFRHPVWGRGQETPGEDAYCLASTYAYEYITGIQGGVDANPLKLIATAKHYAGYDIENWDNHSRLGNDMQITQQDLAEYYTPQFLVASRDAKVHSVMCSYNAVNGVPSCSNSFFLQTLLRDTFDFVEDGYVSGDCGAVYNVFNPHGYATNESSAAADSIRAGTDIDCGVSYPRHFQESFHDQEVSRQDLERGVTRLYASLIRAGYFDGKTSPYRNITWSDVVSTNAQNLSYEAAAQSIVLLKNDGILPLTTSSSTKTIALIGPWANATTQMLGNYYGPAPYLISPLQAFQDSEYKITYTIGTNTTTDPDSTSQSTALTTAKEADLIIFAGGIDNTLETEAQDRSNITWPSNQLSLITKLADLGKPLIVLQMGGGQVDSSALKNNKNVNALIWGGYPGQSGGQALADIITGKRAPAARLVTTQYPAEYAEVFPAIDMNLRPNGSNPGQTYMWYTGTPVYEFGHGLFYTNFTASASAGSGTKNRTSFNIDEVLGRPHPGYKLVEQMPLLNFTVDVKNTGDRVSDYTAMAFVNTTAGPAPHPNKWLVGFDRLSAVEPGSAKTMVIPVTVDSLARTDEEGNRVLYPGRYEVALNNEREVVLGFTLTGEKAVLFKWPKEEQLIAPQ</sequence>
<evidence type="ECO:0000250" key="1"/>
<evidence type="ECO:0000255" key="2"/>
<evidence type="ECO:0000305" key="3"/>
<gene>
    <name type="primary">xlnD</name>
    <name type="synonym">xylA</name>
    <name type="ORF">AFLA_082390</name>
</gene>
<protein>
    <recommendedName>
        <fullName>Probable exo-1,4-beta-xylosidase xlnD</fullName>
        <ecNumber>3.2.1.37</ecNumber>
    </recommendedName>
    <alternativeName>
        <fullName>1,4-beta-D-xylan xylohydrolase xlnD</fullName>
    </alternativeName>
    <alternativeName>
        <fullName>Beta-xylosidase A</fullName>
    </alternativeName>
    <alternativeName>
        <fullName>Beta-xylosidase xlnD</fullName>
    </alternativeName>
    <alternativeName>
        <fullName>Xylobiase xlnD</fullName>
    </alternativeName>
</protein>
<comment type="function">
    <text evidence="1">Xylan 1,4-beta-xylosidase involved in the hydrolysis of xylan, a major structural heterogeneous polysaccharide found in plant biomass representing the second most abundant polysaccharide in the biosphere, after cellulose.</text>
</comment>
<comment type="catalytic activity">
    <reaction>
        <text>Hydrolysis of (1-&gt;4)-beta-D-xylans, to remove successive D-xylose residues from the non-reducing termini.</text>
        <dbReference type="EC" id="3.2.1.37"/>
    </reaction>
</comment>
<comment type="pathway">
    <text>Glycan degradation; xylan degradation.</text>
</comment>
<comment type="subcellular location">
    <subcellularLocation>
        <location evidence="1">Secreted</location>
    </subcellularLocation>
</comment>
<comment type="similarity">
    <text evidence="3">Belongs to the glycosyl hydrolase 3 family.</text>
</comment>
<reference key="1">
    <citation type="journal article" date="2015" name="Genome Announc.">
        <title>Genome sequence of Aspergillus flavus NRRL 3357, a strain that causes aflatoxin contamination of food and feed.</title>
        <authorList>
            <person name="Nierman W.C."/>
            <person name="Yu J."/>
            <person name="Fedorova-Abrams N.D."/>
            <person name="Losada L."/>
            <person name="Cleveland T.E."/>
            <person name="Bhatnagar D."/>
            <person name="Bennett J.W."/>
            <person name="Dean R."/>
            <person name="Payne G.A."/>
        </authorList>
    </citation>
    <scope>NUCLEOTIDE SEQUENCE [LARGE SCALE GENOMIC DNA]</scope>
    <source>
        <strain>ATCC 200026 / FGSC A1120 / IAM 13836 / NRRL 3357 / JCM 12722 / SRRC 167</strain>
    </source>
</reference>
<dbReference type="EC" id="3.2.1.37"/>
<dbReference type="EMBL" id="EQ963472">
    <property type="protein sequence ID" value="EED57542.1"/>
    <property type="molecule type" value="Genomic_DNA"/>
</dbReference>
<dbReference type="RefSeq" id="XP_002373154.1">
    <property type="nucleotide sequence ID" value="XM_002373113.1"/>
</dbReference>
<dbReference type="SMR" id="B8MYV0"/>
<dbReference type="STRING" id="332952.B8MYV0"/>
<dbReference type="GlyCosmos" id="B8MYV0">
    <property type="glycosylation" value="15 sites, No reported glycans"/>
</dbReference>
<dbReference type="EnsemblFungi" id="EED57542">
    <property type="protein sequence ID" value="EED57542"/>
    <property type="gene ID" value="AFLA_082390"/>
</dbReference>
<dbReference type="VEuPathDB" id="FungiDB:AFLA_003808"/>
<dbReference type="eggNOG" id="ENOG502QQ55">
    <property type="taxonomic scope" value="Eukaryota"/>
</dbReference>
<dbReference type="HOGENOM" id="CLU_004542_5_3_1"/>
<dbReference type="OMA" id="TWNFVED"/>
<dbReference type="UniPathway" id="UPA00114"/>
<dbReference type="GO" id="GO:0005576">
    <property type="term" value="C:extracellular region"/>
    <property type="evidence" value="ECO:0007669"/>
    <property type="project" value="UniProtKB-SubCell"/>
</dbReference>
<dbReference type="GO" id="GO:0046556">
    <property type="term" value="F:alpha-L-arabinofuranosidase activity"/>
    <property type="evidence" value="ECO:0007669"/>
    <property type="project" value="TreeGrafter"/>
</dbReference>
<dbReference type="GO" id="GO:0009044">
    <property type="term" value="F:xylan 1,4-beta-xylosidase activity"/>
    <property type="evidence" value="ECO:0007669"/>
    <property type="project" value="UniProtKB-EC"/>
</dbReference>
<dbReference type="GO" id="GO:0031222">
    <property type="term" value="P:arabinan catabolic process"/>
    <property type="evidence" value="ECO:0007669"/>
    <property type="project" value="TreeGrafter"/>
</dbReference>
<dbReference type="GO" id="GO:0045493">
    <property type="term" value="P:xylan catabolic process"/>
    <property type="evidence" value="ECO:0007669"/>
    <property type="project" value="UniProtKB-UniPathway"/>
</dbReference>
<dbReference type="FunFam" id="2.60.40.10:FF:001420">
    <property type="entry name" value="Exo-1,4-beta-xylosidase xlnD"/>
    <property type="match status" value="1"/>
</dbReference>
<dbReference type="FunFam" id="3.20.20.300:FF:000009">
    <property type="entry name" value="Exo-1,4-beta-xylosidase xlnD"/>
    <property type="match status" value="1"/>
</dbReference>
<dbReference type="FunFam" id="3.40.50.1700:FF:000007">
    <property type="entry name" value="Exo-1,4-beta-xylosidase xlnD"/>
    <property type="match status" value="1"/>
</dbReference>
<dbReference type="Gene3D" id="3.40.50.1700">
    <property type="entry name" value="Glycoside hydrolase family 3 C-terminal domain"/>
    <property type="match status" value="1"/>
</dbReference>
<dbReference type="Gene3D" id="3.20.20.300">
    <property type="entry name" value="Glycoside hydrolase, family 3, N-terminal domain"/>
    <property type="match status" value="1"/>
</dbReference>
<dbReference type="Gene3D" id="2.60.40.10">
    <property type="entry name" value="Immunoglobulins"/>
    <property type="match status" value="1"/>
</dbReference>
<dbReference type="InterPro" id="IPR044993">
    <property type="entry name" value="BXL"/>
</dbReference>
<dbReference type="InterPro" id="IPR026891">
    <property type="entry name" value="Fn3-like"/>
</dbReference>
<dbReference type="InterPro" id="IPR002772">
    <property type="entry name" value="Glyco_hydro_3_C"/>
</dbReference>
<dbReference type="InterPro" id="IPR036881">
    <property type="entry name" value="Glyco_hydro_3_C_sf"/>
</dbReference>
<dbReference type="InterPro" id="IPR001764">
    <property type="entry name" value="Glyco_hydro_3_N"/>
</dbReference>
<dbReference type="InterPro" id="IPR036962">
    <property type="entry name" value="Glyco_hydro_3_N_sf"/>
</dbReference>
<dbReference type="InterPro" id="IPR017853">
    <property type="entry name" value="Glycoside_hydrolase_SF"/>
</dbReference>
<dbReference type="InterPro" id="IPR013783">
    <property type="entry name" value="Ig-like_fold"/>
</dbReference>
<dbReference type="PANTHER" id="PTHR42721:SF13">
    <property type="entry name" value="EXO-1,4-BETA-XYLOSIDASE XLND"/>
    <property type="match status" value="1"/>
</dbReference>
<dbReference type="PANTHER" id="PTHR42721">
    <property type="entry name" value="SUGAR HYDROLASE-RELATED"/>
    <property type="match status" value="1"/>
</dbReference>
<dbReference type="Pfam" id="PF14310">
    <property type="entry name" value="Fn3-like"/>
    <property type="match status" value="1"/>
</dbReference>
<dbReference type="Pfam" id="PF00933">
    <property type="entry name" value="Glyco_hydro_3"/>
    <property type="match status" value="1"/>
</dbReference>
<dbReference type="Pfam" id="PF01915">
    <property type="entry name" value="Glyco_hydro_3_C"/>
    <property type="match status" value="1"/>
</dbReference>
<dbReference type="SMART" id="SM01217">
    <property type="entry name" value="Fn3_like"/>
    <property type="match status" value="1"/>
</dbReference>
<dbReference type="SUPFAM" id="SSF51445">
    <property type="entry name" value="(Trans)glycosidases"/>
    <property type="match status" value="1"/>
</dbReference>
<dbReference type="SUPFAM" id="SSF52279">
    <property type="entry name" value="Beta-D-glucan exohydrolase, C-terminal domain"/>
    <property type="match status" value="1"/>
</dbReference>
<keyword id="KW-0119">Carbohydrate metabolism</keyword>
<keyword id="KW-0325">Glycoprotein</keyword>
<keyword id="KW-0326">Glycosidase</keyword>
<keyword id="KW-0378">Hydrolase</keyword>
<keyword id="KW-0624">Polysaccharide degradation</keyword>
<keyword id="KW-0964">Secreted</keyword>
<keyword id="KW-0732">Signal</keyword>
<keyword id="KW-0858">Xylan degradation</keyword>